<gene>
    <name evidence="1" type="primary">ybeY</name>
    <name type="ordered locus">BURPS1710b_0887</name>
</gene>
<sequence length="184" mass="20341">MTVEVGADENPDFAHDETDGAGDESDDEDAQGRDPELDLAVQYGDEIGDAQRKSLPKRKVIAEWLEPAIFSDTQFTVRFVGADEGRALNHSYRHKDYATNVLTFAYGEEPDGVTVADLVLCCPVVEKEAREQGKTLVAHYAHLLVHGALHAQGYDHERGEEDAAEMEALEIDILAKLGFPNPYR</sequence>
<organism>
    <name type="scientific">Burkholderia pseudomallei (strain 1710b)</name>
    <dbReference type="NCBI Taxonomy" id="320372"/>
    <lineage>
        <taxon>Bacteria</taxon>
        <taxon>Pseudomonadati</taxon>
        <taxon>Pseudomonadota</taxon>
        <taxon>Betaproteobacteria</taxon>
        <taxon>Burkholderiales</taxon>
        <taxon>Burkholderiaceae</taxon>
        <taxon>Burkholderia</taxon>
        <taxon>pseudomallei group</taxon>
    </lineage>
</organism>
<proteinExistence type="inferred from homology"/>
<dbReference type="EC" id="3.1.-.-" evidence="1"/>
<dbReference type="EMBL" id="CP000124">
    <property type="protein sequence ID" value="ABA47742.1"/>
    <property type="status" value="ALT_INIT"/>
    <property type="molecule type" value="Genomic_DNA"/>
</dbReference>
<dbReference type="SMR" id="Q3JVV3"/>
<dbReference type="EnsemblBacteria" id="ABA47742">
    <property type="protein sequence ID" value="ABA47742"/>
    <property type="gene ID" value="BURPS1710b_0887"/>
</dbReference>
<dbReference type="KEGG" id="bpm:BURPS1710b_0887"/>
<dbReference type="HOGENOM" id="CLU_1118710_0_0_4"/>
<dbReference type="Proteomes" id="UP000002700">
    <property type="component" value="Chromosome I"/>
</dbReference>
<dbReference type="GO" id="GO:0005737">
    <property type="term" value="C:cytoplasm"/>
    <property type="evidence" value="ECO:0007669"/>
    <property type="project" value="UniProtKB-SubCell"/>
</dbReference>
<dbReference type="GO" id="GO:0004222">
    <property type="term" value="F:metalloendopeptidase activity"/>
    <property type="evidence" value="ECO:0007669"/>
    <property type="project" value="InterPro"/>
</dbReference>
<dbReference type="GO" id="GO:0004521">
    <property type="term" value="F:RNA endonuclease activity"/>
    <property type="evidence" value="ECO:0007669"/>
    <property type="project" value="UniProtKB-UniRule"/>
</dbReference>
<dbReference type="GO" id="GO:0008270">
    <property type="term" value="F:zinc ion binding"/>
    <property type="evidence" value="ECO:0007669"/>
    <property type="project" value="UniProtKB-UniRule"/>
</dbReference>
<dbReference type="GO" id="GO:0006364">
    <property type="term" value="P:rRNA processing"/>
    <property type="evidence" value="ECO:0007669"/>
    <property type="project" value="UniProtKB-UniRule"/>
</dbReference>
<dbReference type="Gene3D" id="3.40.390.30">
    <property type="entry name" value="Metalloproteases ('zincins'), catalytic domain"/>
    <property type="match status" value="1"/>
</dbReference>
<dbReference type="HAMAP" id="MF_00009">
    <property type="entry name" value="Endoribonucl_YbeY"/>
    <property type="match status" value="1"/>
</dbReference>
<dbReference type="InterPro" id="IPR023091">
    <property type="entry name" value="MetalPrtase_cat_dom_sf_prd"/>
</dbReference>
<dbReference type="InterPro" id="IPR002036">
    <property type="entry name" value="YbeY"/>
</dbReference>
<dbReference type="InterPro" id="IPR020549">
    <property type="entry name" value="YbeY_CS"/>
</dbReference>
<dbReference type="NCBIfam" id="NF010570">
    <property type="entry name" value="PRK13963.1"/>
    <property type="match status" value="1"/>
</dbReference>
<dbReference type="NCBIfam" id="TIGR00043">
    <property type="entry name" value="rRNA maturation RNase YbeY"/>
    <property type="match status" value="1"/>
</dbReference>
<dbReference type="PANTHER" id="PTHR46986">
    <property type="entry name" value="ENDORIBONUCLEASE YBEY, CHLOROPLASTIC"/>
    <property type="match status" value="1"/>
</dbReference>
<dbReference type="PANTHER" id="PTHR46986:SF1">
    <property type="entry name" value="ENDORIBONUCLEASE YBEY, CHLOROPLASTIC"/>
    <property type="match status" value="1"/>
</dbReference>
<dbReference type="Pfam" id="PF02130">
    <property type="entry name" value="YbeY"/>
    <property type="match status" value="1"/>
</dbReference>
<dbReference type="SUPFAM" id="SSF55486">
    <property type="entry name" value="Metalloproteases ('zincins'), catalytic domain"/>
    <property type="match status" value="1"/>
</dbReference>
<dbReference type="PROSITE" id="PS01306">
    <property type="entry name" value="UPF0054"/>
    <property type="match status" value="1"/>
</dbReference>
<keyword id="KW-0963">Cytoplasm</keyword>
<keyword id="KW-0255">Endonuclease</keyword>
<keyword id="KW-0378">Hydrolase</keyword>
<keyword id="KW-0479">Metal-binding</keyword>
<keyword id="KW-0540">Nuclease</keyword>
<keyword id="KW-0690">Ribosome biogenesis</keyword>
<keyword id="KW-0698">rRNA processing</keyword>
<keyword id="KW-0862">Zinc</keyword>
<reference key="1">
    <citation type="journal article" date="2010" name="Genome Biol. Evol.">
        <title>Continuing evolution of Burkholderia mallei through genome reduction and large-scale rearrangements.</title>
        <authorList>
            <person name="Losada L."/>
            <person name="Ronning C.M."/>
            <person name="DeShazer D."/>
            <person name="Woods D."/>
            <person name="Fedorova N."/>
            <person name="Kim H.S."/>
            <person name="Shabalina S.A."/>
            <person name="Pearson T.R."/>
            <person name="Brinkac L."/>
            <person name="Tan P."/>
            <person name="Nandi T."/>
            <person name="Crabtree J."/>
            <person name="Badger J."/>
            <person name="Beckstrom-Sternberg S."/>
            <person name="Saqib M."/>
            <person name="Schutzer S.E."/>
            <person name="Keim P."/>
            <person name="Nierman W.C."/>
        </authorList>
    </citation>
    <scope>NUCLEOTIDE SEQUENCE [LARGE SCALE GENOMIC DNA]</scope>
    <source>
        <strain>1710b</strain>
    </source>
</reference>
<feature type="chain" id="PRO_0000284175" description="Endoribonuclease YbeY">
    <location>
        <begin position="1"/>
        <end position="184"/>
    </location>
</feature>
<feature type="region of interest" description="Disordered" evidence="2">
    <location>
        <begin position="1"/>
        <end position="37"/>
    </location>
</feature>
<feature type="compositionally biased region" description="Acidic residues" evidence="2">
    <location>
        <begin position="1"/>
        <end position="11"/>
    </location>
</feature>
<feature type="compositionally biased region" description="Acidic residues" evidence="2">
    <location>
        <begin position="19"/>
        <end position="29"/>
    </location>
</feature>
<feature type="binding site" evidence="1">
    <location>
        <position position="146"/>
    </location>
    <ligand>
        <name>Zn(2+)</name>
        <dbReference type="ChEBI" id="CHEBI:29105"/>
        <note>catalytic</note>
    </ligand>
</feature>
<feature type="binding site" evidence="1">
    <location>
        <position position="150"/>
    </location>
    <ligand>
        <name>Zn(2+)</name>
        <dbReference type="ChEBI" id="CHEBI:29105"/>
        <note>catalytic</note>
    </ligand>
</feature>
<feature type="binding site" evidence="1">
    <location>
        <position position="156"/>
    </location>
    <ligand>
        <name>Zn(2+)</name>
        <dbReference type="ChEBI" id="CHEBI:29105"/>
        <note>catalytic</note>
    </ligand>
</feature>
<protein>
    <recommendedName>
        <fullName evidence="1">Endoribonuclease YbeY</fullName>
        <ecNumber evidence="1">3.1.-.-</ecNumber>
    </recommendedName>
</protein>
<name>YBEY_BURP1</name>
<accession>Q3JVV3</accession>
<evidence type="ECO:0000255" key="1">
    <source>
        <dbReference type="HAMAP-Rule" id="MF_00009"/>
    </source>
</evidence>
<evidence type="ECO:0000256" key="2">
    <source>
        <dbReference type="SAM" id="MobiDB-lite"/>
    </source>
</evidence>
<evidence type="ECO:0000305" key="3"/>
<comment type="function">
    <text evidence="1">Single strand-specific metallo-endoribonuclease involved in late-stage 70S ribosome quality control and in maturation of the 3' terminus of the 16S rRNA.</text>
</comment>
<comment type="cofactor">
    <cofactor evidence="1">
        <name>Zn(2+)</name>
        <dbReference type="ChEBI" id="CHEBI:29105"/>
    </cofactor>
    <text evidence="1">Binds 1 zinc ion.</text>
</comment>
<comment type="subcellular location">
    <subcellularLocation>
        <location evidence="1">Cytoplasm</location>
    </subcellularLocation>
</comment>
<comment type="similarity">
    <text evidence="1">Belongs to the endoribonuclease YbeY family.</text>
</comment>
<comment type="sequence caution" evidence="3">
    <conflict type="erroneous initiation">
        <sequence resource="EMBL-CDS" id="ABA47742"/>
    </conflict>
</comment>